<name>RS9_AQUAE</name>
<gene>
    <name type="primary">rpsI</name>
    <name type="ordered locus">aq_1878</name>
</gene>
<sequence length="147" mass="17065">MIQKLKDFKLTPENTYYATGKRKEAVARVWLLRDRPNTFIVGSDKTNKEYDLREYVQRETLYNKIMYPFKVTGHEGKFGIYATVRGGGISAQAEAIMYGVAKALLQHNPDLRPTLKKAGLLTRDAREKERKKYGQMGARAKYRWSKR</sequence>
<protein>
    <recommendedName>
        <fullName evidence="2">Small ribosomal subunit protein uS9</fullName>
    </recommendedName>
    <alternativeName>
        <fullName>30S ribosomal protein S9</fullName>
    </alternativeName>
</protein>
<proteinExistence type="inferred from homology"/>
<keyword id="KW-1185">Reference proteome</keyword>
<keyword id="KW-0687">Ribonucleoprotein</keyword>
<keyword id="KW-0689">Ribosomal protein</keyword>
<feature type="chain" id="PRO_0000111321" description="Small ribosomal subunit protein uS9">
    <location>
        <begin position="1"/>
        <end position="147"/>
    </location>
</feature>
<feature type="region of interest" description="Disordered" evidence="1">
    <location>
        <begin position="128"/>
        <end position="147"/>
    </location>
</feature>
<accession>O67723</accession>
<evidence type="ECO:0000256" key="1">
    <source>
        <dbReference type="SAM" id="MobiDB-lite"/>
    </source>
</evidence>
<evidence type="ECO:0000305" key="2"/>
<reference key="1">
    <citation type="journal article" date="1998" name="Nature">
        <title>The complete genome of the hyperthermophilic bacterium Aquifex aeolicus.</title>
        <authorList>
            <person name="Deckert G."/>
            <person name="Warren P.V."/>
            <person name="Gaasterland T."/>
            <person name="Young W.G."/>
            <person name="Lenox A.L."/>
            <person name="Graham D.E."/>
            <person name="Overbeek R."/>
            <person name="Snead M.A."/>
            <person name="Keller M."/>
            <person name="Aujay M."/>
            <person name="Huber R."/>
            <person name="Feldman R.A."/>
            <person name="Short J.M."/>
            <person name="Olsen G.J."/>
            <person name="Swanson R.V."/>
        </authorList>
    </citation>
    <scope>NUCLEOTIDE SEQUENCE [LARGE SCALE GENOMIC DNA]</scope>
    <source>
        <strain>VF5</strain>
    </source>
</reference>
<comment type="similarity">
    <text evidence="2">Belongs to the universal ribosomal protein uS9 family.</text>
</comment>
<dbReference type="EMBL" id="AE000657">
    <property type="protein sequence ID" value="AAC07692.1"/>
    <property type="molecule type" value="Genomic_DNA"/>
</dbReference>
<dbReference type="PIR" id="A70462">
    <property type="entry name" value="A70462"/>
</dbReference>
<dbReference type="RefSeq" id="NP_214291.1">
    <property type="nucleotide sequence ID" value="NC_000918.1"/>
</dbReference>
<dbReference type="RefSeq" id="WP_010881227.1">
    <property type="nucleotide sequence ID" value="NC_000918.1"/>
</dbReference>
<dbReference type="SMR" id="O67723"/>
<dbReference type="FunCoup" id="O67723">
    <property type="interactions" value="538"/>
</dbReference>
<dbReference type="STRING" id="224324.aq_1878"/>
<dbReference type="EnsemblBacteria" id="AAC07692">
    <property type="protein sequence ID" value="AAC07692"/>
    <property type="gene ID" value="aq_1878"/>
</dbReference>
<dbReference type="KEGG" id="aae:aq_1878"/>
<dbReference type="PATRIC" id="fig|224324.8.peg.1456"/>
<dbReference type="eggNOG" id="COG0103">
    <property type="taxonomic scope" value="Bacteria"/>
</dbReference>
<dbReference type="HOGENOM" id="CLU_046483_2_1_0"/>
<dbReference type="InParanoid" id="O67723"/>
<dbReference type="OrthoDB" id="9803965at2"/>
<dbReference type="Proteomes" id="UP000000798">
    <property type="component" value="Chromosome"/>
</dbReference>
<dbReference type="GO" id="GO:0022627">
    <property type="term" value="C:cytosolic small ribosomal subunit"/>
    <property type="evidence" value="ECO:0000318"/>
    <property type="project" value="GO_Central"/>
</dbReference>
<dbReference type="GO" id="GO:0003723">
    <property type="term" value="F:RNA binding"/>
    <property type="evidence" value="ECO:0000318"/>
    <property type="project" value="GO_Central"/>
</dbReference>
<dbReference type="GO" id="GO:0003735">
    <property type="term" value="F:structural constituent of ribosome"/>
    <property type="evidence" value="ECO:0000318"/>
    <property type="project" value="GO_Central"/>
</dbReference>
<dbReference type="GO" id="GO:0006412">
    <property type="term" value="P:translation"/>
    <property type="evidence" value="ECO:0007669"/>
    <property type="project" value="UniProtKB-UniRule"/>
</dbReference>
<dbReference type="Gene3D" id="3.30.230.10">
    <property type="match status" value="1"/>
</dbReference>
<dbReference type="HAMAP" id="MF_00532_B">
    <property type="entry name" value="Ribosomal_uS9_B"/>
    <property type="match status" value="1"/>
</dbReference>
<dbReference type="InterPro" id="IPR020568">
    <property type="entry name" value="Ribosomal_Su5_D2-typ_SF"/>
</dbReference>
<dbReference type="InterPro" id="IPR000754">
    <property type="entry name" value="Ribosomal_uS9"/>
</dbReference>
<dbReference type="InterPro" id="IPR023035">
    <property type="entry name" value="Ribosomal_uS9_bac/plastid"/>
</dbReference>
<dbReference type="InterPro" id="IPR020574">
    <property type="entry name" value="Ribosomal_uS9_CS"/>
</dbReference>
<dbReference type="InterPro" id="IPR014721">
    <property type="entry name" value="Ribsml_uS5_D2-typ_fold_subgr"/>
</dbReference>
<dbReference type="NCBIfam" id="NF001099">
    <property type="entry name" value="PRK00132.1"/>
    <property type="match status" value="1"/>
</dbReference>
<dbReference type="PANTHER" id="PTHR21569">
    <property type="entry name" value="RIBOSOMAL PROTEIN S9"/>
    <property type="match status" value="1"/>
</dbReference>
<dbReference type="PANTHER" id="PTHR21569:SF1">
    <property type="entry name" value="SMALL RIBOSOMAL SUBUNIT PROTEIN US9M"/>
    <property type="match status" value="1"/>
</dbReference>
<dbReference type="Pfam" id="PF00380">
    <property type="entry name" value="Ribosomal_S9"/>
    <property type="match status" value="1"/>
</dbReference>
<dbReference type="SUPFAM" id="SSF54211">
    <property type="entry name" value="Ribosomal protein S5 domain 2-like"/>
    <property type="match status" value="1"/>
</dbReference>
<dbReference type="PROSITE" id="PS00360">
    <property type="entry name" value="RIBOSOMAL_S9"/>
    <property type="match status" value="1"/>
</dbReference>
<organism>
    <name type="scientific">Aquifex aeolicus (strain VF5)</name>
    <dbReference type="NCBI Taxonomy" id="224324"/>
    <lineage>
        <taxon>Bacteria</taxon>
        <taxon>Pseudomonadati</taxon>
        <taxon>Aquificota</taxon>
        <taxon>Aquificia</taxon>
        <taxon>Aquificales</taxon>
        <taxon>Aquificaceae</taxon>
        <taxon>Aquifex</taxon>
    </lineage>
</organism>